<gene>
    <name evidence="1" type="primary">petC</name>
    <name type="ordered locus">Syncc9902_1734</name>
</gene>
<reference key="1">
    <citation type="submission" date="2005-08" db="EMBL/GenBank/DDBJ databases">
        <title>Complete sequence of Synechococcus sp. CC9902.</title>
        <authorList>
            <person name="Copeland A."/>
            <person name="Lucas S."/>
            <person name="Lapidus A."/>
            <person name="Barry K."/>
            <person name="Detter J.C."/>
            <person name="Glavina T."/>
            <person name="Hammon N."/>
            <person name="Israni S."/>
            <person name="Pitluck S."/>
            <person name="Martinez M."/>
            <person name="Schmutz J."/>
            <person name="Larimer F."/>
            <person name="Land M."/>
            <person name="Kyrpides N."/>
            <person name="Ivanova N."/>
            <person name="Richardson P."/>
        </authorList>
    </citation>
    <scope>NUCLEOTIDE SEQUENCE [LARGE SCALE GENOMIC DNA]</scope>
    <source>
        <strain>CC9902</strain>
    </source>
</reference>
<organism>
    <name type="scientific">Synechococcus sp. (strain CC9902)</name>
    <dbReference type="NCBI Taxonomy" id="316279"/>
    <lineage>
        <taxon>Bacteria</taxon>
        <taxon>Bacillati</taxon>
        <taxon>Cyanobacteriota</taxon>
        <taxon>Cyanophyceae</taxon>
        <taxon>Synechococcales</taxon>
        <taxon>Synechococcaceae</taxon>
        <taxon>Synechococcus</taxon>
    </lineage>
</organism>
<proteinExistence type="inferred from homology"/>
<evidence type="ECO:0000255" key="1">
    <source>
        <dbReference type="HAMAP-Rule" id="MF_01335"/>
    </source>
</evidence>
<feature type="chain" id="PRO_0000298464" description="Cytochrome b6-f complex iron-sulfur subunit">
    <location>
        <begin position="1"/>
        <end position="178"/>
    </location>
</feature>
<feature type="transmembrane region" description="Helical" evidence="1">
    <location>
        <begin position="20"/>
        <end position="42"/>
    </location>
</feature>
<feature type="domain" description="Rieske" evidence="1">
    <location>
        <begin position="65"/>
        <end position="161"/>
    </location>
</feature>
<feature type="binding site" evidence="1">
    <location>
        <position position="107"/>
    </location>
    <ligand>
        <name>[2Fe-2S] cluster</name>
        <dbReference type="ChEBI" id="CHEBI:190135"/>
    </ligand>
</feature>
<feature type="binding site" evidence="1">
    <location>
        <position position="109"/>
    </location>
    <ligand>
        <name>[2Fe-2S] cluster</name>
        <dbReference type="ChEBI" id="CHEBI:190135"/>
    </ligand>
</feature>
<feature type="binding site" evidence="1">
    <location>
        <position position="125"/>
    </location>
    <ligand>
        <name>[2Fe-2S] cluster</name>
        <dbReference type="ChEBI" id="CHEBI:190135"/>
    </ligand>
</feature>
<feature type="binding site" evidence="1">
    <location>
        <position position="128"/>
    </location>
    <ligand>
        <name>[2Fe-2S] cluster</name>
        <dbReference type="ChEBI" id="CHEBI:190135"/>
    </ligand>
</feature>
<feature type="disulfide bond" evidence="1">
    <location>
        <begin position="112"/>
        <end position="127"/>
    </location>
</feature>
<dbReference type="EC" id="7.1.1.6" evidence="1"/>
<dbReference type="EMBL" id="CP000097">
    <property type="protein sequence ID" value="ABB26691.1"/>
    <property type="molecule type" value="Genomic_DNA"/>
</dbReference>
<dbReference type="RefSeq" id="WP_011360498.1">
    <property type="nucleotide sequence ID" value="NC_007513.1"/>
</dbReference>
<dbReference type="SMR" id="Q3AWL7"/>
<dbReference type="STRING" id="316279.Syncc9902_1734"/>
<dbReference type="KEGG" id="sye:Syncc9902_1734"/>
<dbReference type="eggNOG" id="COG0723">
    <property type="taxonomic scope" value="Bacteria"/>
</dbReference>
<dbReference type="HOGENOM" id="CLU_055690_8_0_3"/>
<dbReference type="OrthoDB" id="9767869at2"/>
<dbReference type="Proteomes" id="UP000002712">
    <property type="component" value="Chromosome"/>
</dbReference>
<dbReference type="GO" id="GO:0031676">
    <property type="term" value="C:plasma membrane-derived thylakoid membrane"/>
    <property type="evidence" value="ECO:0007669"/>
    <property type="project" value="UniProtKB-SubCell"/>
</dbReference>
<dbReference type="GO" id="GO:0051537">
    <property type="term" value="F:2 iron, 2 sulfur cluster binding"/>
    <property type="evidence" value="ECO:0007669"/>
    <property type="project" value="UniProtKB-KW"/>
</dbReference>
<dbReference type="GO" id="GO:0045158">
    <property type="term" value="F:electron transporter, transferring electrons within cytochrome b6/f complex of photosystem II activity"/>
    <property type="evidence" value="ECO:0007669"/>
    <property type="project" value="UniProtKB-UniRule"/>
</dbReference>
<dbReference type="GO" id="GO:0046872">
    <property type="term" value="F:metal ion binding"/>
    <property type="evidence" value="ECO:0007669"/>
    <property type="project" value="UniProtKB-KW"/>
</dbReference>
<dbReference type="GO" id="GO:0004497">
    <property type="term" value="F:monooxygenase activity"/>
    <property type="evidence" value="ECO:0007669"/>
    <property type="project" value="UniProtKB-ARBA"/>
</dbReference>
<dbReference type="GO" id="GO:0016705">
    <property type="term" value="F:oxidoreductase activity, acting on paired donors, with incorporation or reduction of molecular oxygen"/>
    <property type="evidence" value="ECO:0007669"/>
    <property type="project" value="UniProtKB-ARBA"/>
</dbReference>
<dbReference type="GO" id="GO:0009496">
    <property type="term" value="F:plastoquinol--plastocyanin reductase activity"/>
    <property type="evidence" value="ECO:0007669"/>
    <property type="project" value="UniProtKB-UniRule"/>
</dbReference>
<dbReference type="GO" id="GO:0015979">
    <property type="term" value="P:photosynthesis"/>
    <property type="evidence" value="ECO:0007669"/>
    <property type="project" value="UniProtKB-UniRule"/>
</dbReference>
<dbReference type="CDD" id="cd03471">
    <property type="entry name" value="Rieske_cytochrome_b6f"/>
    <property type="match status" value="1"/>
</dbReference>
<dbReference type="FunFam" id="2.102.10.10:FF:000007">
    <property type="entry name" value="Cytochrome b6-f complex iron-sulfur subunit"/>
    <property type="match status" value="1"/>
</dbReference>
<dbReference type="Gene3D" id="2.102.10.10">
    <property type="entry name" value="Rieske [2Fe-2S] iron-sulphur domain"/>
    <property type="match status" value="1"/>
</dbReference>
<dbReference type="Gene3D" id="1.20.5.700">
    <property type="entry name" value="Single helix bin"/>
    <property type="match status" value="1"/>
</dbReference>
<dbReference type="HAMAP" id="MF_01335">
    <property type="entry name" value="Cytb6_f_Rieske"/>
    <property type="match status" value="1"/>
</dbReference>
<dbReference type="InterPro" id="IPR023960">
    <property type="entry name" value="Cyt_b6_f_Rieske"/>
</dbReference>
<dbReference type="InterPro" id="IPR017941">
    <property type="entry name" value="Rieske_2Fe-2S"/>
</dbReference>
<dbReference type="InterPro" id="IPR036922">
    <property type="entry name" value="Rieske_2Fe-2S_sf"/>
</dbReference>
<dbReference type="InterPro" id="IPR014349">
    <property type="entry name" value="Rieske_Fe-S_prot"/>
</dbReference>
<dbReference type="InterPro" id="IPR005805">
    <property type="entry name" value="Rieske_Fe-S_prot_C"/>
</dbReference>
<dbReference type="InterPro" id="IPR006311">
    <property type="entry name" value="TAT_signal"/>
</dbReference>
<dbReference type="NCBIfam" id="NF045928">
    <property type="entry name" value="Cytb6fFeSPetC"/>
    <property type="match status" value="1"/>
</dbReference>
<dbReference type="NCBIfam" id="NF010001">
    <property type="entry name" value="PRK13474.1"/>
    <property type="match status" value="1"/>
</dbReference>
<dbReference type="PANTHER" id="PTHR10134">
    <property type="entry name" value="CYTOCHROME B-C1 COMPLEX SUBUNIT RIESKE, MITOCHONDRIAL"/>
    <property type="match status" value="1"/>
</dbReference>
<dbReference type="Pfam" id="PF00355">
    <property type="entry name" value="Rieske"/>
    <property type="match status" value="1"/>
</dbReference>
<dbReference type="Pfam" id="PF25471">
    <property type="entry name" value="TM_PetC"/>
    <property type="match status" value="1"/>
</dbReference>
<dbReference type="PRINTS" id="PR00162">
    <property type="entry name" value="RIESKE"/>
</dbReference>
<dbReference type="SUPFAM" id="SSF50022">
    <property type="entry name" value="ISP domain"/>
    <property type="match status" value="1"/>
</dbReference>
<dbReference type="PROSITE" id="PS51296">
    <property type="entry name" value="RIESKE"/>
    <property type="match status" value="1"/>
</dbReference>
<dbReference type="PROSITE" id="PS51318">
    <property type="entry name" value="TAT"/>
    <property type="match status" value="1"/>
</dbReference>
<name>UCRI_SYNS9</name>
<sequence>MTQIPSSDVPGMGRRQFMNLLTFGSVTGVALGALYPVARYFIPPKAAGSGGGTTAKDELGNVVTATGWLSTHPEGDRSLVQGLKGDPTYLIVEGADAIGSYGINAICTHLGCVVPWNSGANKFMCPCHGSQYDATGKVVRGPAPLSLALANVSVEDDNVFVSEWSETDFRTGDKPWWA</sequence>
<comment type="function">
    <text evidence="1">Component of the cytochrome b6-f complex, which mediates electron transfer between photosystem II (PSII) and photosystem I (PSI), cyclic electron flow around PSI, and state transitions.</text>
</comment>
<comment type="catalytic activity">
    <reaction evidence="1">
        <text>2 oxidized [plastocyanin] + a plastoquinol + 2 H(+)(in) = 2 reduced [plastocyanin] + a plastoquinone + 4 H(+)(out)</text>
        <dbReference type="Rhea" id="RHEA:22148"/>
        <dbReference type="Rhea" id="RHEA-COMP:9561"/>
        <dbReference type="Rhea" id="RHEA-COMP:9562"/>
        <dbReference type="Rhea" id="RHEA-COMP:10039"/>
        <dbReference type="Rhea" id="RHEA-COMP:10040"/>
        <dbReference type="ChEBI" id="CHEBI:15378"/>
        <dbReference type="ChEBI" id="CHEBI:17757"/>
        <dbReference type="ChEBI" id="CHEBI:29036"/>
        <dbReference type="ChEBI" id="CHEBI:49552"/>
        <dbReference type="ChEBI" id="CHEBI:62192"/>
        <dbReference type="EC" id="7.1.1.6"/>
    </reaction>
</comment>
<comment type="cofactor">
    <cofactor evidence="1">
        <name>[2Fe-2S] cluster</name>
        <dbReference type="ChEBI" id="CHEBI:190135"/>
    </cofactor>
    <text evidence="1">Binds 1 [2Fe-2S] cluster per subunit.</text>
</comment>
<comment type="subunit">
    <text evidence="1">The 4 large subunits of the cytochrome b6-f complex are cytochrome b6, subunit IV (17 kDa polypeptide, PetD), cytochrome f and the Rieske protein, while the 4 small subunits are PetG, PetL, PetM and PetN. The complex functions as a dimer.</text>
</comment>
<comment type="subcellular location">
    <subcellularLocation>
        <location evidence="1">Cellular thylakoid membrane</location>
        <topology evidence="1">Single-pass membrane protein</topology>
    </subcellularLocation>
    <text evidence="1">The transmembrane helix obliquely spans the membrane in one monomer, and its extrinsic C-terminal domain is part of the other monomer.</text>
</comment>
<comment type="miscellaneous">
    <text>The Rieske iron-sulfur protein is a high potential 2Fe-2S protein.</text>
</comment>
<comment type="similarity">
    <text evidence="1">Belongs to the Rieske iron-sulfur protein family.</text>
</comment>
<accession>Q3AWL7</accession>
<keyword id="KW-0001">2Fe-2S</keyword>
<keyword id="KW-1015">Disulfide bond</keyword>
<keyword id="KW-0249">Electron transport</keyword>
<keyword id="KW-0408">Iron</keyword>
<keyword id="KW-0411">Iron-sulfur</keyword>
<keyword id="KW-0472">Membrane</keyword>
<keyword id="KW-0479">Metal-binding</keyword>
<keyword id="KW-1185">Reference proteome</keyword>
<keyword id="KW-0793">Thylakoid</keyword>
<keyword id="KW-1278">Translocase</keyword>
<keyword id="KW-0812">Transmembrane</keyword>
<keyword id="KW-1133">Transmembrane helix</keyword>
<keyword id="KW-0813">Transport</keyword>
<protein>
    <recommendedName>
        <fullName evidence="1">Cytochrome b6-f complex iron-sulfur subunit</fullName>
        <ecNumber evidence="1">7.1.1.6</ecNumber>
    </recommendedName>
    <alternativeName>
        <fullName evidence="1">Plastohydroquinone:plastocyanin oxidoreductase iron-sulfur protein</fullName>
        <shortName evidence="1">ISP</shortName>
        <shortName evidence="1">RISP</shortName>
    </alternativeName>
    <alternativeName>
        <fullName evidence="1">Rieske iron-sulfur protein</fullName>
    </alternativeName>
</protein>